<organism>
    <name type="scientific">Haemophilus ducreyi (strain 35000HP / ATCC 700724)</name>
    <dbReference type="NCBI Taxonomy" id="233412"/>
    <lineage>
        <taxon>Bacteria</taxon>
        <taxon>Pseudomonadati</taxon>
        <taxon>Pseudomonadota</taxon>
        <taxon>Gammaproteobacteria</taxon>
        <taxon>Pasteurellales</taxon>
        <taxon>Pasteurellaceae</taxon>
        <taxon>Haemophilus</taxon>
    </lineage>
</organism>
<sequence>MIQQERLLKVLKAPHISEKATKNAEKGNTIVFKVALDANKVEVANAVQELFEVKVDSVRTVVVKGKTKRHGARMGRRSDWKKAYVTLQEGQSLDFVEGAAE</sequence>
<name>RL23_HAEDU</name>
<accession>Q7VKD4</accession>
<gene>
    <name evidence="1" type="primary">rplW</name>
    <name type="ordered locus">HD_1981</name>
</gene>
<evidence type="ECO:0000255" key="1">
    <source>
        <dbReference type="HAMAP-Rule" id="MF_01369"/>
    </source>
</evidence>
<evidence type="ECO:0000305" key="2"/>
<protein>
    <recommendedName>
        <fullName evidence="1">Large ribosomal subunit protein uL23</fullName>
    </recommendedName>
    <alternativeName>
        <fullName evidence="2">50S ribosomal protein L23</fullName>
    </alternativeName>
</protein>
<reference key="1">
    <citation type="submission" date="2003-06" db="EMBL/GenBank/DDBJ databases">
        <title>The complete genome sequence of Haemophilus ducreyi.</title>
        <authorList>
            <person name="Munson R.S. Jr."/>
            <person name="Ray W.C."/>
            <person name="Mahairas G."/>
            <person name="Sabo P."/>
            <person name="Mungur R."/>
            <person name="Johnson L."/>
            <person name="Nguyen D."/>
            <person name="Wang J."/>
            <person name="Forst C."/>
            <person name="Hood L."/>
        </authorList>
    </citation>
    <scope>NUCLEOTIDE SEQUENCE [LARGE SCALE GENOMIC DNA]</scope>
    <source>
        <strain>35000HP / ATCC 700724</strain>
    </source>
</reference>
<dbReference type="EMBL" id="AE017143">
    <property type="protein sequence ID" value="AAP96698.1"/>
    <property type="molecule type" value="Genomic_DNA"/>
</dbReference>
<dbReference type="RefSeq" id="WP_010945719.1">
    <property type="nucleotide sequence ID" value="NC_002940.2"/>
</dbReference>
<dbReference type="SMR" id="Q7VKD4"/>
<dbReference type="STRING" id="233412.HD_1981"/>
<dbReference type="GeneID" id="60733545"/>
<dbReference type="KEGG" id="hdu:HD_1981"/>
<dbReference type="eggNOG" id="COG0089">
    <property type="taxonomic scope" value="Bacteria"/>
</dbReference>
<dbReference type="HOGENOM" id="CLU_037562_3_1_6"/>
<dbReference type="OrthoDB" id="9793353at2"/>
<dbReference type="Proteomes" id="UP000001022">
    <property type="component" value="Chromosome"/>
</dbReference>
<dbReference type="GO" id="GO:1990904">
    <property type="term" value="C:ribonucleoprotein complex"/>
    <property type="evidence" value="ECO:0007669"/>
    <property type="project" value="UniProtKB-KW"/>
</dbReference>
<dbReference type="GO" id="GO:0005840">
    <property type="term" value="C:ribosome"/>
    <property type="evidence" value="ECO:0007669"/>
    <property type="project" value="UniProtKB-KW"/>
</dbReference>
<dbReference type="GO" id="GO:0019843">
    <property type="term" value="F:rRNA binding"/>
    <property type="evidence" value="ECO:0007669"/>
    <property type="project" value="UniProtKB-UniRule"/>
</dbReference>
<dbReference type="GO" id="GO:0003735">
    <property type="term" value="F:structural constituent of ribosome"/>
    <property type="evidence" value="ECO:0007669"/>
    <property type="project" value="InterPro"/>
</dbReference>
<dbReference type="GO" id="GO:0006412">
    <property type="term" value="P:translation"/>
    <property type="evidence" value="ECO:0007669"/>
    <property type="project" value="UniProtKB-UniRule"/>
</dbReference>
<dbReference type="FunFam" id="3.30.70.330:FF:000001">
    <property type="entry name" value="50S ribosomal protein L23"/>
    <property type="match status" value="1"/>
</dbReference>
<dbReference type="Gene3D" id="3.30.70.330">
    <property type="match status" value="1"/>
</dbReference>
<dbReference type="HAMAP" id="MF_01369_B">
    <property type="entry name" value="Ribosomal_uL23_B"/>
    <property type="match status" value="1"/>
</dbReference>
<dbReference type="InterPro" id="IPR012677">
    <property type="entry name" value="Nucleotide-bd_a/b_plait_sf"/>
</dbReference>
<dbReference type="InterPro" id="IPR013025">
    <property type="entry name" value="Ribosomal_uL23-like"/>
</dbReference>
<dbReference type="InterPro" id="IPR012678">
    <property type="entry name" value="Ribosomal_uL23/eL15/eS24_sf"/>
</dbReference>
<dbReference type="InterPro" id="IPR001014">
    <property type="entry name" value="Ribosomal_uL23_CS"/>
</dbReference>
<dbReference type="NCBIfam" id="NF004358">
    <property type="entry name" value="PRK05738.1-1"/>
    <property type="match status" value="1"/>
</dbReference>
<dbReference type="NCBIfam" id="NF004359">
    <property type="entry name" value="PRK05738.1-3"/>
    <property type="match status" value="1"/>
</dbReference>
<dbReference type="NCBIfam" id="NF004363">
    <property type="entry name" value="PRK05738.2-4"/>
    <property type="match status" value="1"/>
</dbReference>
<dbReference type="PANTHER" id="PTHR11620">
    <property type="entry name" value="60S RIBOSOMAL PROTEIN L23A"/>
    <property type="match status" value="1"/>
</dbReference>
<dbReference type="Pfam" id="PF00276">
    <property type="entry name" value="Ribosomal_L23"/>
    <property type="match status" value="1"/>
</dbReference>
<dbReference type="SUPFAM" id="SSF54189">
    <property type="entry name" value="Ribosomal proteins S24e, L23 and L15e"/>
    <property type="match status" value="1"/>
</dbReference>
<dbReference type="PROSITE" id="PS00050">
    <property type="entry name" value="RIBOSOMAL_L23"/>
    <property type="match status" value="1"/>
</dbReference>
<proteinExistence type="inferred from homology"/>
<comment type="function">
    <text evidence="1">One of the early assembly proteins it binds 23S rRNA. One of the proteins that surrounds the polypeptide exit tunnel on the outside of the ribosome. Forms the main docking site for trigger factor binding to the ribosome.</text>
</comment>
<comment type="subunit">
    <text evidence="1">Part of the 50S ribosomal subunit. Contacts protein L29, and trigger factor when it is bound to the ribosome.</text>
</comment>
<comment type="similarity">
    <text evidence="1">Belongs to the universal ribosomal protein uL23 family.</text>
</comment>
<feature type="chain" id="PRO_0000272756" description="Large ribosomal subunit protein uL23">
    <location>
        <begin position="1"/>
        <end position="101"/>
    </location>
</feature>
<keyword id="KW-1185">Reference proteome</keyword>
<keyword id="KW-0687">Ribonucleoprotein</keyword>
<keyword id="KW-0689">Ribosomal protein</keyword>
<keyword id="KW-0694">RNA-binding</keyword>
<keyword id="KW-0699">rRNA-binding</keyword>